<keyword id="KW-0084">Basement membrane</keyword>
<keyword id="KW-1003">Cell membrane</keyword>
<keyword id="KW-0272">Extracellular matrix</keyword>
<keyword id="KW-0325">Glycoprotein</keyword>
<keyword id="KW-0413">Isomerase</keyword>
<keyword id="KW-0472">Membrane</keyword>
<keyword id="KW-1185">Reference proteome</keyword>
<keyword id="KW-0964">Secreted</keyword>
<keyword id="KW-0735">Signal-anchor</keyword>
<keyword id="KW-0812">Transmembrane</keyword>
<keyword id="KW-1133">Transmembrane helix</keyword>
<feature type="chain" id="PRO_0000192647" description="D-glucuronyl C5-epimerase">
    <location>
        <begin position="1"/>
        <end position="616"/>
    </location>
</feature>
<feature type="topological domain" description="Cytoplasmic" evidence="3">
    <location>
        <begin position="1"/>
        <end position="12"/>
    </location>
</feature>
<feature type="transmembrane region" description="Helical; Signal-anchor for type II membrane protein" evidence="3">
    <location>
        <begin position="13"/>
        <end position="29"/>
    </location>
</feature>
<feature type="topological domain" description="Extracellular" evidence="3">
    <location>
        <begin position="30"/>
        <end position="616"/>
    </location>
</feature>
<feature type="binding site" evidence="1">
    <location>
        <position position="136"/>
    </location>
    <ligand>
        <name>substrate</name>
    </ligand>
</feature>
<feature type="binding site" evidence="1">
    <location>
        <begin position="141"/>
        <end position="143"/>
    </location>
    <ligand>
        <name>substrate</name>
    </ligand>
</feature>
<feature type="binding site" evidence="1">
    <location>
        <position position="169"/>
    </location>
    <ligand>
        <name>substrate</name>
    </ligand>
</feature>
<feature type="binding site" evidence="1">
    <location>
        <position position="504"/>
    </location>
    <ligand>
        <name>substrate</name>
    </ligand>
</feature>
<feature type="binding site" evidence="1">
    <location>
        <position position="562"/>
    </location>
    <ligand>
        <name>substrate</name>
    </ligand>
</feature>
<feature type="binding site" evidence="1">
    <location>
        <begin position="574"/>
        <end position="580"/>
    </location>
    <ligand>
        <name>substrate</name>
    </ligand>
</feature>
<feature type="site" description="Critical for catalysis" evidence="1">
    <location>
        <position position="136"/>
    </location>
</feature>
<feature type="site" description="Critical for catalysis" evidence="1">
    <location>
        <position position="143"/>
    </location>
</feature>
<feature type="site" description="Critical for catalysis" evidence="1">
    <location>
        <position position="559"/>
    </location>
</feature>
<feature type="site" description="Critical for catalysis" evidence="1">
    <location>
        <position position="577"/>
    </location>
</feature>
<feature type="glycosylation site" description="N-linked (GlcNAc...) asparagine" evidence="3">
    <location>
        <position position="188"/>
    </location>
</feature>
<feature type="glycosylation site" description="N-linked (GlcNAc...) asparagine" evidence="3">
    <location>
        <position position="232"/>
    </location>
</feature>
<feature type="glycosylation site" description="N-linked (GlcNAc...) asparagine" evidence="3">
    <location>
        <position position="267"/>
    </location>
</feature>
<feature type="glycosylation site" description="N-linked (GlcNAc...) asparagine" evidence="3">
    <location>
        <position position="471"/>
    </location>
</feature>
<feature type="mutagenesis site" description="In ot16; midline crossover defects of PVQL and PVQR axons." evidence="4">
    <original>G</original>
    <variation>E</variation>
    <location>
        <position position="610"/>
    </location>
</feature>
<proteinExistence type="evidence at protein level"/>
<name>GLCE_CAEEL</name>
<dbReference type="EC" id="5.1.3.17" evidence="2"/>
<dbReference type="EMBL" id="AY552607">
    <property type="protein sequence ID" value="AAS89254.1"/>
    <property type="molecule type" value="mRNA"/>
</dbReference>
<dbReference type="EMBL" id="Z34533">
    <property type="protein sequence ID" value="CAA84297.2"/>
    <property type="molecule type" value="Genomic_DNA"/>
</dbReference>
<dbReference type="PIR" id="T18692">
    <property type="entry name" value="T18692"/>
</dbReference>
<dbReference type="RefSeq" id="NP_497876.2">
    <property type="nucleotide sequence ID" value="NM_065475.8"/>
</dbReference>
<dbReference type="SMR" id="P46555"/>
<dbReference type="BioGRID" id="40798">
    <property type="interactions" value="1"/>
</dbReference>
<dbReference type="FunCoup" id="P46555">
    <property type="interactions" value="2657"/>
</dbReference>
<dbReference type="STRING" id="6239.B0285.5.1"/>
<dbReference type="GlyCosmos" id="P46555">
    <property type="glycosylation" value="4 sites, No reported glycans"/>
</dbReference>
<dbReference type="PaxDb" id="6239-B0285.5"/>
<dbReference type="PeptideAtlas" id="P46555"/>
<dbReference type="EnsemblMetazoa" id="B0285.5.1">
    <property type="protein sequence ID" value="B0285.5.1"/>
    <property type="gene ID" value="WBGene00002003"/>
</dbReference>
<dbReference type="EnsemblMetazoa" id="B0285.5.2">
    <property type="protein sequence ID" value="B0285.5.2"/>
    <property type="gene ID" value="WBGene00002003"/>
</dbReference>
<dbReference type="EnsemblMetazoa" id="B0285.5.3">
    <property type="protein sequence ID" value="B0285.5.3"/>
    <property type="gene ID" value="WBGene00002003"/>
</dbReference>
<dbReference type="GeneID" id="175562"/>
<dbReference type="KEGG" id="cel:CELE_B0285.5"/>
<dbReference type="UCSC" id="B0285.5">
    <property type="organism name" value="c. elegans"/>
</dbReference>
<dbReference type="AGR" id="WB:WBGene00002003"/>
<dbReference type="CTD" id="175562"/>
<dbReference type="WormBase" id="B0285.5">
    <property type="protein sequence ID" value="CE36681"/>
    <property type="gene ID" value="WBGene00002003"/>
    <property type="gene designation" value="hse-5"/>
</dbReference>
<dbReference type="eggNOG" id="KOG3760">
    <property type="taxonomic scope" value="Eukaryota"/>
</dbReference>
<dbReference type="GeneTree" id="ENSGT00390000006043"/>
<dbReference type="HOGENOM" id="CLU_028636_0_0_1"/>
<dbReference type="InParanoid" id="P46555"/>
<dbReference type="OMA" id="RGVFMYF"/>
<dbReference type="OrthoDB" id="5914444at2759"/>
<dbReference type="PhylomeDB" id="P46555"/>
<dbReference type="UniPathway" id="UPA00756"/>
<dbReference type="UniPathway" id="UPA00862"/>
<dbReference type="PRO" id="PR:P46555"/>
<dbReference type="Proteomes" id="UP000001940">
    <property type="component" value="Chromosome III"/>
</dbReference>
<dbReference type="Bgee" id="WBGene00002003">
    <property type="expression patterns" value="Expressed in embryo and 4 other cell types or tissues"/>
</dbReference>
<dbReference type="GO" id="GO:0005604">
    <property type="term" value="C:basement membrane"/>
    <property type="evidence" value="ECO:0007669"/>
    <property type="project" value="UniProtKB-SubCell"/>
</dbReference>
<dbReference type="GO" id="GO:0005576">
    <property type="term" value="C:extracellular region"/>
    <property type="evidence" value="ECO:0007669"/>
    <property type="project" value="UniProtKB-KW"/>
</dbReference>
<dbReference type="GO" id="GO:0005794">
    <property type="term" value="C:Golgi apparatus"/>
    <property type="evidence" value="ECO:0000318"/>
    <property type="project" value="GO_Central"/>
</dbReference>
<dbReference type="GO" id="GO:0005886">
    <property type="term" value="C:plasma membrane"/>
    <property type="evidence" value="ECO:0007669"/>
    <property type="project" value="UniProtKB-SubCell"/>
</dbReference>
<dbReference type="GO" id="GO:0047464">
    <property type="term" value="F:heparosan-N-sulfate-glucuronate 5-epimerase activity"/>
    <property type="evidence" value="ECO:0000318"/>
    <property type="project" value="GO_Central"/>
</dbReference>
<dbReference type="GO" id="GO:0015012">
    <property type="term" value="P:heparan sulfate proteoglycan biosynthetic process"/>
    <property type="evidence" value="ECO:0000315"/>
    <property type="project" value="WormBase"/>
</dbReference>
<dbReference type="GO" id="GO:0030210">
    <property type="term" value="P:heparin proteoglycan biosynthetic process"/>
    <property type="evidence" value="ECO:0007669"/>
    <property type="project" value="UniProtKB-UniPathway"/>
</dbReference>
<dbReference type="GO" id="GO:0040018">
    <property type="term" value="P:positive regulation of multicellular organism growth"/>
    <property type="evidence" value="ECO:0000315"/>
    <property type="project" value="WormBase"/>
</dbReference>
<dbReference type="GO" id="GO:0030334">
    <property type="term" value="P:regulation of cell migration"/>
    <property type="evidence" value="ECO:0000315"/>
    <property type="project" value="WormBase"/>
</dbReference>
<dbReference type="InterPro" id="IPR010598">
    <property type="entry name" value="C5-epim_C"/>
</dbReference>
<dbReference type="InterPro" id="IPR039721">
    <property type="entry name" value="C5-epimerase"/>
</dbReference>
<dbReference type="PANTHER" id="PTHR13174">
    <property type="entry name" value="D-GLUCURONYL C5-EPIMERASE"/>
    <property type="match status" value="1"/>
</dbReference>
<dbReference type="PANTHER" id="PTHR13174:SF3">
    <property type="entry name" value="D-GLUCURONYL C5-EPIMERASE"/>
    <property type="match status" value="1"/>
</dbReference>
<dbReference type="Pfam" id="PF06662">
    <property type="entry name" value="C5-epim_C"/>
    <property type="match status" value="1"/>
</dbReference>
<dbReference type="Pfam" id="PF21174">
    <property type="entry name" value="Glce_b_sandwich"/>
    <property type="match status" value="1"/>
</dbReference>
<dbReference type="SUPFAM" id="SSF81853">
    <property type="entry name" value="Family 10 polysaccharide lyase"/>
    <property type="match status" value="1"/>
</dbReference>
<gene>
    <name type="primary">hse-5</name>
    <name type="ORF">B0285.5</name>
</gene>
<protein>
    <recommendedName>
        <fullName>D-glucuronyl C5-epimerase</fullName>
        <ecNumber evidence="2">5.1.3.17</ecNumber>
    </recommendedName>
    <alternativeName>
        <fullName>Heparan sulfate C5-epimerase</fullName>
        <shortName>Hsepi</shortName>
    </alternativeName>
    <alternativeName>
        <fullName>Heparin/heparan sulfate:glucuronic acid C5-epimerase</fullName>
    </alternativeName>
    <alternativeName>
        <fullName>Heparosan-N-sulfate-glucuronate 5-epimerase</fullName>
    </alternativeName>
</protein>
<sequence>MKCLRWRSNRHRIYLLVACGALFLLNRHLTQEESRIDEEDEELTQVDVNEDDKKIECEPPGSIESKCIADNGKSMKCWKDEEDVYFPVSYLKKRFDMTGKLGKDGSTFELYTSYAKMRSPDSTYDPLGPFGHFSTYSVETRDRVRCVSAKTDVPMSTQWDPIPYYYPIQISQYGLQHYSRMKLDSISNKSEASPKDDVILGVNSKEWKGAAGMHETTERLFFNDEQMGKVVNISAGAALANAGAYVYLDKSPDLHVISFDWKPYEANSSFTVLAKMKQDDLLVLINYVYSEGNGKCVWQEEERISDDYIVQKPKKDGQVSYSYSYIGNSPIGEWSTVTRDLLVDVARALSSGDNRKKDDNVVLHAGDLRLVSLGFRGELTVKQKITQRREQHSHAFYAAADWLVKNQNDRGGWSVPVERSIAERKLVLPPGWHSAMAQGHGISVLTRAFKHFNDEKYLKSAAKALKLFKINSSDGGVRGEFFGNIWYEEYPTTPGSFVLNGFLYSLIGLYDLSQLELMIDENDETMRAKIQEAQELYSAGVRSLKQLLPLYDTGSGTIYDLRHVALGTAPNLARWDYHAVHVYLLKWIAGIEKDEVLSKTADRWIGYAYGKRAKHN</sequence>
<evidence type="ECO:0000250" key="1">
    <source>
        <dbReference type="UniProtKB" id="F1QR43"/>
    </source>
</evidence>
<evidence type="ECO:0000250" key="2">
    <source>
        <dbReference type="UniProtKB" id="O94923"/>
    </source>
</evidence>
<evidence type="ECO:0000255" key="3"/>
<evidence type="ECO:0000269" key="4">
    <source>
    </source>
</evidence>
<evidence type="ECO:0000269" key="5">
    <source>
    </source>
</evidence>
<evidence type="ECO:0000305" key="6"/>
<reference key="1">
    <citation type="journal article" date="2004" name="Neuron">
        <title>Differential sulfations and epimerization define heparan sulfate specificity in nervous system development.</title>
        <authorList>
            <person name="Buelow H.E."/>
            <person name="Hobert O."/>
        </authorList>
    </citation>
    <scope>NUCLEOTIDE SEQUENCE [MRNA]</scope>
    <scope>TISSUE SPECIFICITY</scope>
    <scope>MUTAGENESIS OF GLY-610</scope>
</reference>
<reference key="2">
    <citation type="journal article" date="1998" name="Science">
        <title>Genome sequence of the nematode C. elegans: a platform for investigating biology.</title>
        <authorList>
            <consortium name="The C. elegans sequencing consortium"/>
        </authorList>
    </citation>
    <scope>NUCLEOTIDE SEQUENCE [LARGE SCALE GENOMIC DNA]</scope>
    <source>
        <strain>Bristol N2</strain>
    </source>
</reference>
<reference key="3">
    <citation type="journal article" date="2015" name="G3 (Bethesda)">
        <title>SDN-1/Syndecan acts in parallel to the transmembrane molecule MIG-13 to promote anterior neuroblast migration.</title>
        <authorList>
            <person name="Sundararajan L."/>
            <person name="Norris M.L."/>
            <person name="Lundquist E.A."/>
        </authorList>
    </citation>
    <scope>FUNCTION</scope>
    <scope>DISRUPTION PHENOTYPE</scope>
</reference>
<organism>
    <name type="scientific">Caenorhabditis elegans</name>
    <dbReference type="NCBI Taxonomy" id="6239"/>
    <lineage>
        <taxon>Eukaryota</taxon>
        <taxon>Metazoa</taxon>
        <taxon>Ecdysozoa</taxon>
        <taxon>Nematoda</taxon>
        <taxon>Chromadorea</taxon>
        <taxon>Rhabditida</taxon>
        <taxon>Rhabditina</taxon>
        <taxon>Rhabditomorpha</taxon>
        <taxon>Rhabditoidea</taxon>
        <taxon>Rhabditidae</taxon>
        <taxon>Peloderinae</taxon>
        <taxon>Caenorhabditis</taxon>
    </lineage>
</organism>
<comment type="function">
    <text evidence="2 5">Converts D-glucuronic acid residues adjacent to N-sulfate sugar residues to L-iduronic acids (By similarity). Plays a role in the early migration of AQR and PQR neurons, which descend from the Q neuroblasts (PubMed:26022293).</text>
</comment>
<comment type="catalytic activity">
    <reaction evidence="2">
        <text>[heparosan-N-sulfate](n) = [heparan-N-sulfate](n)</text>
        <dbReference type="Rhea" id="RHEA:20197"/>
        <dbReference type="Rhea" id="RHEA-COMP:9556"/>
        <dbReference type="Rhea" id="RHEA-COMP:9557"/>
        <dbReference type="ChEBI" id="CHEBI:58041"/>
        <dbReference type="ChEBI" id="CHEBI:58287"/>
        <dbReference type="EC" id="5.1.3.17"/>
    </reaction>
</comment>
<comment type="pathway">
    <text>Glycan metabolism; heparan sulfate biosynthesis.</text>
</comment>
<comment type="pathway">
    <text>Glycan metabolism; heparin biosynthesis.</text>
</comment>
<comment type="subunit">
    <text evidence="1">Homodimer.</text>
</comment>
<comment type="subcellular location">
    <subcellularLocation>
        <location evidence="6">Cell membrane</location>
        <topology evidence="6">Single-pass type II membrane protein</topology>
    </subcellularLocation>
    <subcellularLocation>
        <location>Secreted</location>
        <location>Extracellular space</location>
        <location>Extracellular matrix</location>
        <location>Basement membrane</location>
    </subcellularLocation>
</comment>
<comment type="tissue specificity">
    <text evidence="4">Expression in comma stage embryos is strong in the hypodermis and intestine and weaker in the head region. In late embryos, larval, and adult stages, expressed primarily in hypodermis and intestine.</text>
</comment>
<comment type="disruption phenotype">
    <text evidence="5">Irregular positioning of the AQR and PQR neurons in larva at the L4 stage.</text>
</comment>
<comment type="similarity">
    <text evidence="6">Belongs to the D-glucuronyl C5-epimerase family.</text>
</comment>
<accession>P46555</accession>
<accession>Q6Q8P8</accession>